<gene>
    <name evidence="2" type="primary">vapC2</name>
    <name type="ordered locus">MT0314</name>
</gene>
<organism>
    <name type="scientific">Mycobacterium tuberculosis (strain CDC 1551 / Oshkosh)</name>
    <dbReference type="NCBI Taxonomy" id="83331"/>
    <lineage>
        <taxon>Bacteria</taxon>
        <taxon>Bacillati</taxon>
        <taxon>Actinomycetota</taxon>
        <taxon>Actinomycetes</taxon>
        <taxon>Mycobacteriales</taxon>
        <taxon>Mycobacteriaceae</taxon>
        <taxon>Mycobacterium</taxon>
        <taxon>Mycobacterium tuberculosis complex</taxon>
    </lineage>
</organism>
<sequence length="141" mass="15746">MTDQRWLIDKSALVRLTDSPDMEIWSNRIERGLVHITGVTRLEVGFSAECGEIARREFREPPLSAMPVEYLTPRIEDRALEVQTLLADRGHHRGPSIPDLLIAATAELSGLTVLHVDKDFDAIAALTGQKTERLTHRPPSA</sequence>
<evidence type="ECO:0000250" key="1"/>
<evidence type="ECO:0000255" key="2">
    <source>
        <dbReference type="HAMAP-Rule" id="MF_00265"/>
    </source>
</evidence>
<keyword id="KW-0378">Hydrolase</keyword>
<keyword id="KW-0460">Magnesium</keyword>
<keyword id="KW-0479">Metal-binding</keyword>
<keyword id="KW-0540">Nuclease</keyword>
<keyword id="KW-1185">Reference proteome</keyword>
<keyword id="KW-1277">Toxin-antitoxin system</keyword>
<comment type="function">
    <text evidence="1">Toxic component of a type II toxin-antitoxin (TA) system. Acts as an RNase. All its toxic effects are neutralized by coexpression with cognate antitoxin VapB2 (By similarity).</text>
</comment>
<comment type="cofactor">
    <cofactor evidence="1">
        <name>Mg(2+)</name>
        <dbReference type="ChEBI" id="CHEBI:18420"/>
    </cofactor>
    <text evidence="1">Binds 1 Mg(2+) ion per monomer.</text>
</comment>
<comment type="subunit">
    <text evidence="1">Probably active as a homodimer.</text>
</comment>
<comment type="similarity">
    <text evidence="2">Belongs to the PINc/VapC protein family.</text>
</comment>
<feature type="chain" id="PRO_0000428566" description="Ribonuclease VapC2">
    <location>
        <begin position="1"/>
        <end position="141"/>
    </location>
</feature>
<feature type="domain" description="PINc" evidence="2">
    <location>
        <begin position="7"/>
        <end position="129"/>
    </location>
</feature>
<feature type="binding site" evidence="2">
    <location>
        <position position="99"/>
    </location>
    <ligand>
        <name>Mg(2+)</name>
        <dbReference type="ChEBI" id="CHEBI:18420"/>
    </ligand>
</feature>
<feature type="binding site" evidence="2">
    <location>
        <position position="117"/>
    </location>
    <ligand>
        <name>Mg(2+)</name>
        <dbReference type="ChEBI" id="CHEBI:18420"/>
    </ligand>
</feature>
<feature type="binding site" evidence="2">
    <location>
        <position position="119"/>
    </location>
    <ligand>
        <name>Mg(2+)</name>
        <dbReference type="ChEBI" id="CHEBI:18420"/>
    </ligand>
</feature>
<reference key="1">
    <citation type="journal article" date="2002" name="J. Bacteriol.">
        <title>Whole-genome comparison of Mycobacterium tuberculosis clinical and laboratory strains.</title>
        <authorList>
            <person name="Fleischmann R.D."/>
            <person name="Alland D."/>
            <person name="Eisen J.A."/>
            <person name="Carpenter L."/>
            <person name="White O."/>
            <person name="Peterson J.D."/>
            <person name="DeBoy R.T."/>
            <person name="Dodson R.J."/>
            <person name="Gwinn M.L."/>
            <person name="Haft D.H."/>
            <person name="Hickey E.K."/>
            <person name="Kolonay J.F."/>
            <person name="Nelson W.C."/>
            <person name="Umayam L.A."/>
            <person name="Ermolaeva M.D."/>
            <person name="Salzberg S.L."/>
            <person name="Delcher A."/>
            <person name="Utterback T.R."/>
            <person name="Weidman J.F."/>
            <person name="Khouri H.M."/>
            <person name="Gill J."/>
            <person name="Mikula A."/>
            <person name="Bishai W."/>
            <person name="Jacobs W.R. Jr."/>
            <person name="Venter J.C."/>
            <person name="Fraser C.M."/>
        </authorList>
    </citation>
    <scope>NUCLEOTIDE SEQUENCE [LARGE SCALE GENOMIC DNA]</scope>
    <source>
        <strain>CDC 1551 / Oshkosh</strain>
    </source>
</reference>
<protein>
    <recommendedName>
        <fullName evidence="2">Ribonuclease VapC2</fullName>
        <shortName evidence="2">RNase VapC2</shortName>
        <ecNumber evidence="2">3.1.-.-</ecNumber>
    </recommendedName>
    <alternativeName>
        <fullName evidence="2">Toxin VapC2</fullName>
    </alternativeName>
</protein>
<proteinExistence type="inferred from homology"/>
<accession>P9WFB8</accession>
<accession>L0T386</accession>
<accession>O07228</accession>
<accession>Q7DA25</accession>
<name>VAPC2_MYCTO</name>
<dbReference type="EC" id="3.1.-.-" evidence="2"/>
<dbReference type="EMBL" id="AE000516">
    <property type="protein sequence ID" value="AAK44537.1"/>
    <property type="molecule type" value="Genomic_DNA"/>
</dbReference>
<dbReference type="PIR" id="F70523">
    <property type="entry name" value="F70523"/>
</dbReference>
<dbReference type="RefSeq" id="WP_003401566.1">
    <property type="nucleotide sequence ID" value="NZ_KK341227.1"/>
</dbReference>
<dbReference type="SMR" id="P9WFB8"/>
<dbReference type="KEGG" id="mtc:MT0314"/>
<dbReference type="PATRIC" id="fig|83331.31.peg.337"/>
<dbReference type="HOGENOM" id="CLU_118482_4_1_11"/>
<dbReference type="Proteomes" id="UP000001020">
    <property type="component" value="Chromosome"/>
</dbReference>
<dbReference type="GO" id="GO:0000287">
    <property type="term" value="F:magnesium ion binding"/>
    <property type="evidence" value="ECO:0007669"/>
    <property type="project" value="UniProtKB-UniRule"/>
</dbReference>
<dbReference type="GO" id="GO:0004540">
    <property type="term" value="F:RNA nuclease activity"/>
    <property type="evidence" value="ECO:0007669"/>
    <property type="project" value="InterPro"/>
</dbReference>
<dbReference type="CDD" id="cd18755">
    <property type="entry name" value="PIN_MtVapC3_VapC21-like"/>
    <property type="match status" value="1"/>
</dbReference>
<dbReference type="FunFam" id="3.40.50.1010:FF:000092">
    <property type="entry name" value="Ribonuclease VapC"/>
    <property type="match status" value="1"/>
</dbReference>
<dbReference type="Gene3D" id="3.40.50.1010">
    <property type="entry name" value="5'-nuclease"/>
    <property type="match status" value="1"/>
</dbReference>
<dbReference type="HAMAP" id="MF_00265">
    <property type="entry name" value="VapC_Nob1"/>
    <property type="match status" value="1"/>
</dbReference>
<dbReference type="InterPro" id="IPR029060">
    <property type="entry name" value="PIN-like_dom_sf"/>
</dbReference>
<dbReference type="InterPro" id="IPR002716">
    <property type="entry name" value="PIN_dom"/>
</dbReference>
<dbReference type="InterPro" id="IPR050556">
    <property type="entry name" value="Type_II_TA_system_RNase"/>
</dbReference>
<dbReference type="InterPro" id="IPR022907">
    <property type="entry name" value="VapC_family"/>
</dbReference>
<dbReference type="PANTHER" id="PTHR33653">
    <property type="entry name" value="RIBONUCLEASE VAPC2"/>
    <property type="match status" value="1"/>
</dbReference>
<dbReference type="PANTHER" id="PTHR33653:SF1">
    <property type="entry name" value="RIBONUCLEASE VAPC2"/>
    <property type="match status" value="1"/>
</dbReference>
<dbReference type="Pfam" id="PF01850">
    <property type="entry name" value="PIN"/>
    <property type="match status" value="1"/>
</dbReference>
<dbReference type="SUPFAM" id="SSF88723">
    <property type="entry name" value="PIN domain-like"/>
    <property type="match status" value="1"/>
</dbReference>